<organism>
    <name type="scientific">Acidithiobacillus ferrooxidans (strain ATCC 53993 / BNL-5-31)</name>
    <name type="common">Leptospirillum ferrooxidans (ATCC 53993)</name>
    <dbReference type="NCBI Taxonomy" id="380394"/>
    <lineage>
        <taxon>Bacteria</taxon>
        <taxon>Pseudomonadati</taxon>
        <taxon>Pseudomonadota</taxon>
        <taxon>Acidithiobacillia</taxon>
        <taxon>Acidithiobacillales</taxon>
        <taxon>Acidithiobacillaceae</taxon>
        <taxon>Acidithiobacillus</taxon>
    </lineage>
</organism>
<evidence type="ECO:0000255" key="1">
    <source>
        <dbReference type="HAMAP-Rule" id="MF_01018"/>
    </source>
</evidence>
<keyword id="KW-0028">Amino-acid biosynthesis</keyword>
<keyword id="KW-0067">ATP-binding</keyword>
<keyword id="KW-0963">Cytoplasm</keyword>
<keyword id="KW-0328">Glycosyltransferase</keyword>
<keyword id="KW-0368">Histidine biosynthesis</keyword>
<keyword id="KW-0547">Nucleotide-binding</keyword>
<keyword id="KW-0808">Transferase</keyword>
<reference key="1">
    <citation type="submission" date="2008-08" db="EMBL/GenBank/DDBJ databases">
        <title>Complete sequence of Acidithiobacillus ferrooxidans ATCC 53993.</title>
        <authorList>
            <person name="Lucas S."/>
            <person name="Copeland A."/>
            <person name="Lapidus A."/>
            <person name="Glavina del Rio T."/>
            <person name="Dalin E."/>
            <person name="Tice H."/>
            <person name="Bruce D."/>
            <person name="Goodwin L."/>
            <person name="Pitluck S."/>
            <person name="Sims D."/>
            <person name="Brettin T."/>
            <person name="Detter J.C."/>
            <person name="Han C."/>
            <person name="Kuske C.R."/>
            <person name="Larimer F."/>
            <person name="Land M."/>
            <person name="Hauser L."/>
            <person name="Kyrpides N."/>
            <person name="Lykidis A."/>
            <person name="Borole A.P."/>
        </authorList>
    </citation>
    <scope>NUCLEOTIDE SEQUENCE [LARGE SCALE GENOMIC DNA]</scope>
    <source>
        <strain>ATCC 53993 / BNL-5-31</strain>
    </source>
</reference>
<gene>
    <name evidence="1" type="primary">hisG</name>
    <name type="ordered locus">Lferr_2649</name>
</gene>
<comment type="function">
    <text evidence="1">Catalyzes the condensation of ATP and 5-phosphoribose 1-diphosphate to form N'-(5'-phosphoribosyl)-ATP (PR-ATP). Has a crucial role in the pathway because the rate of histidine biosynthesis seems to be controlled primarily by regulation of HisG enzymatic activity.</text>
</comment>
<comment type="catalytic activity">
    <reaction evidence="1">
        <text>1-(5-phospho-beta-D-ribosyl)-ATP + diphosphate = 5-phospho-alpha-D-ribose 1-diphosphate + ATP</text>
        <dbReference type="Rhea" id="RHEA:18473"/>
        <dbReference type="ChEBI" id="CHEBI:30616"/>
        <dbReference type="ChEBI" id="CHEBI:33019"/>
        <dbReference type="ChEBI" id="CHEBI:58017"/>
        <dbReference type="ChEBI" id="CHEBI:73183"/>
        <dbReference type="EC" id="2.4.2.17"/>
    </reaction>
</comment>
<comment type="pathway">
    <text evidence="1">Amino-acid biosynthesis; L-histidine biosynthesis; L-histidine from 5-phospho-alpha-D-ribose 1-diphosphate: step 1/9.</text>
</comment>
<comment type="subunit">
    <text evidence="1">Heteromultimer composed of HisG and HisZ subunits.</text>
</comment>
<comment type="subcellular location">
    <subcellularLocation>
        <location evidence="1">Cytoplasm</location>
    </subcellularLocation>
</comment>
<comment type="domain">
    <text>Lacks the C-terminal regulatory region which is replaced by HisZ.</text>
</comment>
<comment type="similarity">
    <text evidence="1">Belongs to the ATP phosphoribosyltransferase family. Short subfamily.</text>
</comment>
<dbReference type="EC" id="2.4.2.17" evidence="1"/>
<dbReference type="EMBL" id="CP001132">
    <property type="protein sequence ID" value="ACH84843.1"/>
    <property type="molecule type" value="Genomic_DNA"/>
</dbReference>
<dbReference type="RefSeq" id="WP_012537562.1">
    <property type="nucleotide sequence ID" value="NC_011206.1"/>
</dbReference>
<dbReference type="SMR" id="B5EQE6"/>
<dbReference type="GeneID" id="65282042"/>
<dbReference type="KEGG" id="afe:Lferr_2649"/>
<dbReference type="eggNOG" id="COG0040">
    <property type="taxonomic scope" value="Bacteria"/>
</dbReference>
<dbReference type="HOGENOM" id="CLU_038115_2_0_6"/>
<dbReference type="UniPathway" id="UPA00031">
    <property type="reaction ID" value="UER00006"/>
</dbReference>
<dbReference type="GO" id="GO:0005737">
    <property type="term" value="C:cytoplasm"/>
    <property type="evidence" value="ECO:0007669"/>
    <property type="project" value="UniProtKB-SubCell"/>
</dbReference>
<dbReference type="GO" id="GO:0005524">
    <property type="term" value="F:ATP binding"/>
    <property type="evidence" value="ECO:0007669"/>
    <property type="project" value="UniProtKB-KW"/>
</dbReference>
<dbReference type="GO" id="GO:0003879">
    <property type="term" value="F:ATP phosphoribosyltransferase activity"/>
    <property type="evidence" value="ECO:0007669"/>
    <property type="project" value="UniProtKB-UniRule"/>
</dbReference>
<dbReference type="GO" id="GO:0000105">
    <property type="term" value="P:L-histidine biosynthetic process"/>
    <property type="evidence" value="ECO:0007669"/>
    <property type="project" value="UniProtKB-UniRule"/>
</dbReference>
<dbReference type="CDD" id="cd13595">
    <property type="entry name" value="PBP2_HisGs"/>
    <property type="match status" value="1"/>
</dbReference>
<dbReference type="FunFam" id="3.40.190.10:FF:000011">
    <property type="entry name" value="ATP phosphoribosyltransferase"/>
    <property type="match status" value="1"/>
</dbReference>
<dbReference type="Gene3D" id="3.40.190.10">
    <property type="entry name" value="Periplasmic binding protein-like II"/>
    <property type="match status" value="2"/>
</dbReference>
<dbReference type="HAMAP" id="MF_01018">
    <property type="entry name" value="HisG_Short"/>
    <property type="match status" value="1"/>
</dbReference>
<dbReference type="InterPro" id="IPR013820">
    <property type="entry name" value="ATP_PRibTrfase_cat"/>
</dbReference>
<dbReference type="InterPro" id="IPR018198">
    <property type="entry name" value="ATP_PRibTrfase_CS"/>
</dbReference>
<dbReference type="InterPro" id="IPR001348">
    <property type="entry name" value="ATP_PRibTrfase_HisG"/>
</dbReference>
<dbReference type="InterPro" id="IPR024893">
    <property type="entry name" value="ATP_PRibTrfase_HisG_short"/>
</dbReference>
<dbReference type="NCBIfam" id="TIGR00070">
    <property type="entry name" value="hisG"/>
    <property type="match status" value="1"/>
</dbReference>
<dbReference type="PANTHER" id="PTHR21403:SF8">
    <property type="entry name" value="ATP PHOSPHORIBOSYLTRANSFERASE"/>
    <property type="match status" value="1"/>
</dbReference>
<dbReference type="PANTHER" id="PTHR21403">
    <property type="entry name" value="ATP PHOSPHORIBOSYLTRANSFERASE ATP-PRTASE"/>
    <property type="match status" value="1"/>
</dbReference>
<dbReference type="Pfam" id="PF01634">
    <property type="entry name" value="HisG"/>
    <property type="match status" value="1"/>
</dbReference>
<dbReference type="SUPFAM" id="SSF53850">
    <property type="entry name" value="Periplasmic binding protein-like II"/>
    <property type="match status" value="1"/>
</dbReference>
<dbReference type="PROSITE" id="PS01316">
    <property type="entry name" value="ATP_P_PHORIBOSYLTR"/>
    <property type="match status" value="1"/>
</dbReference>
<proteinExistence type="inferred from homology"/>
<sequence>MSTGITIALSKGRILQEAIPLFAGAGIHLAEDPEESRKLIIPSTDPTVRFLVIRASDVPTYVTWGAADVGIAGKDVLLEQEGLDLYEPLDLRIGICHMAVAEPAAMAADDAPQSWERVRIATKYPHITRHYFHSRGVQTEIIKLYGSMELAPLVGLADRIVDLVSSGRTLKENGLVEVEEIMPISSRLVVNRAAMKLKRRAIETLIRQLEAQVTP</sequence>
<name>HIS1_ACIF5</name>
<protein>
    <recommendedName>
        <fullName evidence="1">ATP phosphoribosyltransferase</fullName>
        <shortName evidence="1">ATP-PRT</shortName>
        <shortName evidence="1">ATP-PRTase</shortName>
        <ecNumber evidence="1">2.4.2.17</ecNumber>
    </recommendedName>
</protein>
<accession>B5EQE6</accession>
<feature type="chain" id="PRO_1000213248" description="ATP phosphoribosyltransferase">
    <location>
        <begin position="1"/>
        <end position="215"/>
    </location>
</feature>